<keyword id="KW-0067">ATP-binding</keyword>
<keyword id="KW-0175">Coiled coil</keyword>
<keyword id="KW-0433">Leucine-rich repeat</keyword>
<keyword id="KW-0547">Nucleotide-binding</keyword>
<keyword id="KW-0611">Plant defense</keyword>
<keyword id="KW-0677">Repeat</keyword>
<proteinExistence type="inferred from homology"/>
<accession>A9QGV6</accession>
<organism>
    <name type="scientific">Arabidopsis thaliana</name>
    <name type="common">Mouse-ear cress</name>
    <dbReference type="NCBI Taxonomy" id="3702"/>
    <lineage>
        <taxon>Eukaryota</taxon>
        <taxon>Viridiplantae</taxon>
        <taxon>Streptophyta</taxon>
        <taxon>Embryophyta</taxon>
        <taxon>Tracheophyta</taxon>
        <taxon>Spermatophyta</taxon>
        <taxon>Magnoliopsida</taxon>
        <taxon>eudicotyledons</taxon>
        <taxon>Gunneridae</taxon>
        <taxon>Pentapetalae</taxon>
        <taxon>rosids</taxon>
        <taxon>malvids</taxon>
        <taxon>Brassicales</taxon>
        <taxon>Brassicaceae</taxon>
        <taxon>Camelineae</taxon>
        <taxon>Arabidopsis</taxon>
    </lineage>
</organism>
<protein>
    <recommendedName>
        <fullName>Inactive disease susceptibility protein LOV1</fullName>
    </recommendedName>
    <alternativeName>
        <fullName>Disease resistance protein RPP8-like protein 1</fullName>
    </alternativeName>
    <alternativeName>
        <fullName>Protein LONG VEGETATIVE PHASE1</fullName>
    </alternativeName>
</protein>
<evidence type="ECO:0000255" key="1"/>
<evidence type="ECO:0000305" key="2"/>
<comment type="similarity">
    <text evidence="2">Belongs to the disease resistance NB-LRR family. RPP8/HRT subfamily.</text>
</comment>
<comment type="caution">
    <text evidence="2">Has been shown to confer susceptibility to the fungus Cochliobolus victoriae by conditioning victorin-dependent (victorin is a toxin synthesized by C.victoriae) induction of defense-associated proteins in cv. Cl-0 (AC A7XGN8). In strain cv. Bay-0, 2 variations at positions 228 (Thr -&gt; Ala) and 538 (Arg -&gt; Ser) result in an inactive LOV1 protein regarding sensitivity to victorin. The sequence shown is from strain cv. Bay-0, a complete sequence for LOV1 can be found in strain cv. Cl-0 (AC A7XGN8).</text>
</comment>
<comment type="online information" name="NIB-LRRS">
    <link uri="http://niblrrs.ucdavis.edu"/>
    <text>Functional and comparative genomics of disease resistance gene homologs</text>
</comment>
<sequence length="910" mass="104426">MAEGVVLFGVHKLWELLNRESARLNGIGEQVDGLKRQLGRLQSLLKDADAKKHESERVRNFLEDVRDIVYDAEDIIESFLLNEFRAKEKGIKKHARRLACFLVDRRKFDSDIKGITKKISEVIGGMKSLGIQEIIDGASSMSLQERQREQKEIRQTFANSSESDLVGVEQSVEALAGHLVENDNIQVVSISGMGGIGKTTLARQVFHHDMVQRHFDGFAWVFVSQQFAQKHVWQRIWQELQPQNGDISHMDEHILQGKLFKLLETGRYLVVLDDVWKEEDWDRIKAVFPRKRGWKMLLTSRNEGVGIHADPKSFGFKTRILTPEESWKLCEKIVFHRRDETGTLSEVRVDEDMEAMGKEMVTCCGGLPLAVKVLGGLLATKHTVPEWKRVYDNIGPHLAGRSSLDDNLNSIYRVLSLSYEDLPMCLKHCFLYLAHFPEYYEIHVKRLFNYLAAEGIITSSDDGTTIQDKGEDYLEELARRNMITIDKNYMFLRKKHCQMHDMMREVCLSKAKEENFLEIFKVSTATSAINARSLSKSSRLSVHGGNALQSLGQTINKKVRSLLYFAFEDEFCILESTTPCFRSLPLLRVLDLSRVKFEGGKLPSSIGDLIHLRFLSLHRAWISHLPSSLRNLKLLLYLNLGFNGMVHVPNVLKEMQELRYLQLPMSMHDKTKLELSDLVNLESLMNFSTKYASVMDLLHMTKLRELSLFITDGSSDTLSSSLGQLRSLEVLHLYDRQEPRVAYHGGEIVLNCIHLKELELAIHMPRFPDQYLFHPHLSHIYLWCCSMEEDPIPILERLLHLKSVILTFGAFVGRRMVCSKGGFPQLCFLKLEELEELEEWIVEEGSMPLLRALTICNCRKLKLPGGINYITSLKELTIVGMKWKEKLVPGGEDYYKVQNIPNVQFINCDE</sequence>
<name>LOV1C_ARATH</name>
<gene>
    <name type="primary">LOV1</name>
    <name type="synonym">RPP8L1</name>
</gene>
<reference key="1">
    <citation type="journal article" date="2008" name="Mol. Plant Microbe Interact.">
        <title>Characterization of natural and induced variation in the LOV1 gene, a CC-NB-LRR gene conferring victorin sensitivity and disease susceptibility in Arabidopsis.</title>
        <authorList>
            <person name="Sweat T.A."/>
            <person name="Lorang J.M."/>
            <person name="Bakker E.G."/>
            <person name="Wolpert T.J."/>
        </authorList>
    </citation>
    <scope>NUCLEOTIDE SEQUENCE [GENOMIC DNA]</scope>
    <scope>FUNCTION</scope>
    <source>
        <strain>cv. Bay-0</strain>
    </source>
</reference>
<feature type="chain" id="PRO_0000405408" description="Inactive disease susceptibility protein LOV1">
    <location>
        <begin position="1"/>
        <end position="910"/>
    </location>
</feature>
<feature type="domain" description="NB-ARC">
    <location>
        <begin position="169"/>
        <end position="461"/>
    </location>
</feature>
<feature type="repeat" description="LRR 1">
    <location>
        <begin position="584"/>
        <end position="609"/>
    </location>
</feature>
<feature type="repeat" description="LRR 2">
    <location>
        <begin position="610"/>
        <end position="632"/>
    </location>
</feature>
<feature type="repeat" description="LRR 3">
    <location>
        <begin position="634"/>
        <end position="655"/>
    </location>
</feature>
<feature type="coiled-coil region" evidence="1">
    <location>
        <begin position="22"/>
        <end position="60"/>
    </location>
</feature>
<dbReference type="EMBL" id="EU053661">
    <property type="protein sequence ID" value="ABW24149.1"/>
    <property type="molecule type" value="Genomic_DNA"/>
</dbReference>
<dbReference type="SMR" id="A9QGV6"/>
<dbReference type="ExpressionAtlas" id="A9QGV6">
    <property type="expression patterns" value="baseline and differential"/>
</dbReference>
<dbReference type="GO" id="GO:0043531">
    <property type="term" value="F:ADP binding"/>
    <property type="evidence" value="ECO:0007669"/>
    <property type="project" value="InterPro"/>
</dbReference>
<dbReference type="GO" id="GO:0005524">
    <property type="term" value="F:ATP binding"/>
    <property type="evidence" value="ECO:0007669"/>
    <property type="project" value="UniProtKB-KW"/>
</dbReference>
<dbReference type="GO" id="GO:0006952">
    <property type="term" value="P:defense response"/>
    <property type="evidence" value="ECO:0007669"/>
    <property type="project" value="UniProtKB-KW"/>
</dbReference>
<dbReference type="GO" id="GO:0051707">
    <property type="term" value="P:response to other organism"/>
    <property type="evidence" value="ECO:0007669"/>
    <property type="project" value="UniProtKB-ARBA"/>
</dbReference>
<dbReference type="CDD" id="cd14798">
    <property type="entry name" value="RX-CC_like"/>
    <property type="match status" value="1"/>
</dbReference>
<dbReference type="FunFam" id="1.20.5.4130:FF:000002">
    <property type="entry name" value="Disease resistance protein RPP8"/>
    <property type="match status" value="1"/>
</dbReference>
<dbReference type="FunFam" id="3.80.10.10:FF:001707">
    <property type="entry name" value="Inactive disease susceptibility protein LOV1"/>
    <property type="match status" value="1"/>
</dbReference>
<dbReference type="FunFam" id="3.80.10.10:FF:001978">
    <property type="entry name" value="Inactive disease susceptibility protein LOV1"/>
    <property type="match status" value="1"/>
</dbReference>
<dbReference type="FunFam" id="3.40.50.300:FF:001091">
    <property type="entry name" value="Probable disease resistance protein At1g61300"/>
    <property type="match status" value="1"/>
</dbReference>
<dbReference type="FunFam" id="1.10.10.10:FF:000322">
    <property type="entry name" value="Probable disease resistance protein At1g63360"/>
    <property type="match status" value="1"/>
</dbReference>
<dbReference type="FunFam" id="1.10.8.430:FF:000003">
    <property type="entry name" value="Probable disease resistance protein At5g66910"/>
    <property type="match status" value="1"/>
</dbReference>
<dbReference type="Gene3D" id="1.20.5.4130">
    <property type="match status" value="1"/>
</dbReference>
<dbReference type="Gene3D" id="1.10.8.430">
    <property type="entry name" value="Helical domain of apoptotic protease-activating factors"/>
    <property type="match status" value="1"/>
</dbReference>
<dbReference type="Gene3D" id="3.40.50.300">
    <property type="entry name" value="P-loop containing nucleotide triphosphate hydrolases"/>
    <property type="match status" value="1"/>
</dbReference>
<dbReference type="Gene3D" id="3.80.10.10">
    <property type="entry name" value="Ribonuclease Inhibitor"/>
    <property type="match status" value="2"/>
</dbReference>
<dbReference type="Gene3D" id="1.10.10.10">
    <property type="entry name" value="Winged helix-like DNA-binding domain superfamily/Winged helix DNA-binding domain"/>
    <property type="match status" value="1"/>
</dbReference>
<dbReference type="InterPro" id="IPR042197">
    <property type="entry name" value="Apaf_helical"/>
</dbReference>
<dbReference type="InterPro" id="IPR044974">
    <property type="entry name" value="Disease_R_plants"/>
</dbReference>
<dbReference type="InterPro" id="IPR032675">
    <property type="entry name" value="LRR_dom_sf"/>
</dbReference>
<dbReference type="InterPro" id="IPR055414">
    <property type="entry name" value="LRR_R13L4/SHOC2-like"/>
</dbReference>
<dbReference type="InterPro" id="IPR002182">
    <property type="entry name" value="NB-ARC"/>
</dbReference>
<dbReference type="InterPro" id="IPR027417">
    <property type="entry name" value="P-loop_NTPase"/>
</dbReference>
<dbReference type="InterPro" id="IPR038005">
    <property type="entry name" value="RX-like_CC"/>
</dbReference>
<dbReference type="InterPro" id="IPR041118">
    <property type="entry name" value="Rx_N"/>
</dbReference>
<dbReference type="InterPro" id="IPR036388">
    <property type="entry name" value="WH-like_DNA-bd_sf"/>
</dbReference>
<dbReference type="PANTHER" id="PTHR23155">
    <property type="entry name" value="DISEASE RESISTANCE PROTEIN RP"/>
    <property type="match status" value="1"/>
</dbReference>
<dbReference type="PANTHER" id="PTHR23155:SF1185">
    <property type="entry name" value="DISEASE RESISTANCE RPP8-LIKE PROTEIN 3-RELATED"/>
    <property type="match status" value="1"/>
</dbReference>
<dbReference type="Pfam" id="PF23598">
    <property type="entry name" value="LRR_14"/>
    <property type="match status" value="1"/>
</dbReference>
<dbReference type="Pfam" id="PF00931">
    <property type="entry name" value="NB-ARC"/>
    <property type="match status" value="1"/>
</dbReference>
<dbReference type="Pfam" id="PF18052">
    <property type="entry name" value="Rx_N"/>
    <property type="match status" value="1"/>
</dbReference>
<dbReference type="Pfam" id="PF23559">
    <property type="entry name" value="WH_DRP"/>
    <property type="match status" value="1"/>
</dbReference>
<dbReference type="PRINTS" id="PR00364">
    <property type="entry name" value="DISEASERSIST"/>
</dbReference>
<dbReference type="SUPFAM" id="SSF52058">
    <property type="entry name" value="L domain-like"/>
    <property type="match status" value="1"/>
</dbReference>
<dbReference type="SUPFAM" id="SSF52540">
    <property type="entry name" value="P-loop containing nucleoside triphosphate hydrolases"/>
    <property type="match status" value="1"/>
</dbReference>